<accession>Q9UPX6</accession>
<accession>A7MD43</accession>
<feature type="chain" id="PRO_0000157133" description="Major intrinsically disordered Notch2-binding receptor 1">
    <location>
        <begin position="1"/>
        <end position="916"/>
    </location>
</feature>
<feature type="topological domain" description="Cytoplasmic" evidence="11">
    <location>
        <begin position="1"/>
        <end position="891"/>
    </location>
</feature>
<feature type="transmembrane region" description="Helical" evidence="3">
    <location>
        <begin position="892"/>
        <end position="912"/>
    </location>
</feature>
<feature type="topological domain" description="Extracellular" evidence="11">
    <location>
        <begin position="913"/>
        <end position="916"/>
    </location>
</feature>
<feature type="region of interest" description="Disordered" evidence="4">
    <location>
        <begin position="390"/>
        <end position="409"/>
    </location>
</feature>
<feature type="region of interest" description="Disordered" evidence="4">
    <location>
        <begin position="553"/>
        <end position="591"/>
    </location>
</feature>
<feature type="region of interest" description="Disordered" evidence="4">
    <location>
        <begin position="648"/>
        <end position="675"/>
    </location>
</feature>
<feature type="region of interest" description="Disordered" evidence="4">
    <location>
        <begin position="705"/>
        <end position="726"/>
    </location>
</feature>
<feature type="region of interest" description="Disordered" evidence="4">
    <location>
        <begin position="745"/>
        <end position="782"/>
    </location>
</feature>
<feature type="compositionally biased region" description="Basic and acidic residues" evidence="4">
    <location>
        <begin position="553"/>
        <end position="564"/>
    </location>
</feature>
<feature type="compositionally biased region" description="Basic and acidic residues" evidence="4">
    <location>
        <begin position="575"/>
        <end position="591"/>
    </location>
</feature>
<feature type="compositionally biased region" description="Basic and acidic residues" evidence="4">
    <location>
        <begin position="750"/>
        <end position="771"/>
    </location>
</feature>
<feature type="modified residue" description="Phosphoserine" evidence="2">
    <location>
        <position position="711"/>
    </location>
</feature>
<feature type="sequence variant" id="VAR_034044" description="In dbSNP:rs11634652.">
    <original>V</original>
    <variation>F</variation>
    <location>
        <position position="320"/>
    </location>
</feature>
<feature type="sequence variant" id="VAR_022042" description="In dbSNP:rs2297773.">
    <original>I</original>
    <variation>V</variation>
    <location>
        <position position="832"/>
    </location>
</feature>
<comment type="function">
    <text evidence="1 5 6">Intrinsically disordered protein which may negatively regulate mTOR signaling pathway by stabilizing the mTOR complex component DEPTOR (PubMed:30080879). Negatively regulates angiogenesis (PubMed:29329397). Negatively regulates cell growth (PubMed:29329397, PubMed:30080879). Negatively regulates neurite outgrowth in hippocampal neurons (By similarity).</text>
</comment>
<comment type="subunit">
    <text evidence="5 6">Interacts with NOTCH2; this interaction increases MINAR1 stability (PubMed:29329397). Interacts (via N-terminus) with DEPTOR (via PDZ domain); this interaction may stabilize DEPTOR protein by impairing its ubiquitination (PubMed:30080879).</text>
</comment>
<comment type="interaction">
    <interactant intactId="EBI-11977115">
        <id>Q9UPX6</id>
    </interactant>
    <interactant intactId="EBI-11156432">
        <id>Q9Y5P4-2</id>
        <label>CERT1</label>
    </interactant>
    <organismsDiffer>false</organismsDiffer>
    <experiments>3</experiments>
</comment>
<comment type="interaction">
    <interactant intactId="EBI-11977115">
        <id>Q9UPX6</id>
    </interactant>
    <interactant intactId="EBI-739784">
        <id>Q9BW66</id>
        <label>CINP</label>
    </interactant>
    <organismsDiffer>false</organismsDiffer>
    <experiments>3</experiments>
</comment>
<comment type="interaction">
    <interactant intactId="EBI-11977115">
        <id>Q9UPX6</id>
    </interactant>
    <interactant intactId="EBI-740195">
        <id>Q9BUL8</id>
        <label>PDCD10</label>
    </interactant>
    <organismsDiffer>false</organismsDiffer>
    <experiments>3</experiments>
</comment>
<comment type="interaction">
    <interactant intactId="EBI-11977115">
        <id>Q9UPX6</id>
    </interactant>
    <interactant intactId="EBI-8652744">
        <id>Q96IW7</id>
        <label>SEC22A</label>
    </interactant>
    <organismsDiffer>false</organismsDiffer>
    <experiments>3</experiments>
</comment>
<comment type="interaction">
    <interactant intactId="EBI-11977115">
        <id>Q9UPX6</id>
    </interactant>
    <interactant intactId="EBI-81088">
        <id>Q15436</id>
        <label>SEC23A</label>
    </interactant>
    <organismsDiffer>false</organismsDiffer>
    <experiments>3</experiments>
</comment>
<comment type="interaction">
    <interactant intactId="EBI-11977115">
        <id>Q9UPX6</id>
    </interactant>
    <interactant intactId="EBI-11994282">
        <id>Q5SNT2-2</id>
        <label>TMEM201</label>
    </interactant>
    <organismsDiffer>false</organismsDiffer>
    <experiments>3</experiments>
</comment>
<comment type="interaction">
    <interactant intactId="EBI-11977115">
        <id>Q9UPX6</id>
    </interactant>
    <interactant intactId="EBI-765817">
        <id>Q9Y228</id>
        <label>TRAF3IP3</label>
    </interactant>
    <organismsDiffer>false</organismsDiffer>
    <experiments>3</experiments>
</comment>
<comment type="subcellular location">
    <subcellularLocation>
        <location evidence="5 6">Cell membrane</location>
        <topology evidence="6">Single-pass type IV membrane protein</topology>
    </subcellularLocation>
</comment>
<comment type="tissue specificity">
    <text evidence="5">Widely expressed, including in breast epithelial cells and endothelial cells (at protein level). Expression is down-regulated in advanced breast tumors (at protein level).</text>
</comment>
<comment type="similarity">
    <text evidence="9">Belongs to the MINAR family.</text>
</comment>
<comment type="caution">
    <text evidence="10 11">MINAR1 topology is a matter of debate, some authors think the N-terminus is extracellular, while preliminary experimental results suggest a cytosolic location.</text>
</comment>
<comment type="sequence caution" evidence="9">
    <conflict type="erroneous initiation">
        <sequence resource="EMBL-CDS" id="BAA82976"/>
    </conflict>
    <text>Extended N-terminus.</text>
</comment>
<name>MNAR1_HUMAN</name>
<gene>
    <name evidence="7" type="primary">MINAR1</name>
    <name type="synonym">KIAA1024</name>
    <name evidence="8" type="synonym">UBTOR</name>
</gene>
<dbReference type="EMBL" id="AB028947">
    <property type="protein sequence ID" value="BAA82976.2"/>
    <property type="status" value="ALT_INIT"/>
    <property type="molecule type" value="mRNA"/>
</dbReference>
<dbReference type="EMBL" id="CH471136">
    <property type="protein sequence ID" value="EAW99137.1"/>
    <property type="molecule type" value="Genomic_DNA"/>
</dbReference>
<dbReference type="EMBL" id="BC152466">
    <property type="protein sequence ID" value="AAI52467.1"/>
    <property type="molecule type" value="mRNA"/>
</dbReference>
<dbReference type="CCDS" id="CCDS32306.1"/>
<dbReference type="RefSeq" id="NP_056021.1">
    <property type="nucleotide sequence ID" value="NM_015206.3"/>
</dbReference>
<dbReference type="RefSeq" id="XP_011519694.1">
    <property type="nucleotide sequence ID" value="XM_011521392.2"/>
</dbReference>
<dbReference type="RefSeq" id="XP_011519695.1">
    <property type="nucleotide sequence ID" value="XM_011521393.4"/>
</dbReference>
<dbReference type="RefSeq" id="XP_011519697.1">
    <property type="nucleotide sequence ID" value="XM_011521395.3"/>
</dbReference>
<dbReference type="RefSeq" id="XP_011519698.1">
    <property type="nucleotide sequence ID" value="XM_011521396.3"/>
</dbReference>
<dbReference type="RefSeq" id="XP_016877516.1">
    <property type="nucleotide sequence ID" value="XM_017022027.2"/>
</dbReference>
<dbReference type="SMR" id="Q9UPX6"/>
<dbReference type="BioGRID" id="116855">
    <property type="interactions" value="8"/>
</dbReference>
<dbReference type="FunCoup" id="Q9UPX6">
    <property type="interactions" value="677"/>
</dbReference>
<dbReference type="IntAct" id="Q9UPX6">
    <property type="interactions" value="9"/>
</dbReference>
<dbReference type="MINT" id="Q9UPX6"/>
<dbReference type="STRING" id="9606.ENSP00000307461"/>
<dbReference type="GlyGen" id="Q9UPX6">
    <property type="glycosylation" value="1 site"/>
</dbReference>
<dbReference type="iPTMnet" id="Q9UPX6"/>
<dbReference type="PhosphoSitePlus" id="Q9UPX6"/>
<dbReference type="BioMuta" id="KIAA1024"/>
<dbReference type="DMDM" id="32699623"/>
<dbReference type="MassIVE" id="Q9UPX6"/>
<dbReference type="PaxDb" id="9606-ENSP00000307461"/>
<dbReference type="PeptideAtlas" id="Q9UPX6"/>
<dbReference type="ProteomicsDB" id="85466"/>
<dbReference type="Antibodypedia" id="2612">
    <property type="antibodies" value="26 antibodies from 13 providers"/>
</dbReference>
<dbReference type="DNASU" id="23251"/>
<dbReference type="Ensembl" id="ENST00000305428.8">
    <property type="protein sequence ID" value="ENSP00000307461.3"/>
    <property type="gene ID" value="ENSG00000169330.9"/>
</dbReference>
<dbReference type="GeneID" id="23251"/>
<dbReference type="KEGG" id="hsa:23251"/>
<dbReference type="MANE-Select" id="ENST00000305428.8">
    <property type="protein sequence ID" value="ENSP00000307461.3"/>
    <property type="RefSeq nucleotide sequence ID" value="NM_015206.3"/>
    <property type="RefSeq protein sequence ID" value="NP_056021.1"/>
</dbReference>
<dbReference type="UCSC" id="uc002bew.2">
    <property type="organism name" value="human"/>
</dbReference>
<dbReference type="AGR" id="HGNC:29172"/>
<dbReference type="CTD" id="23251"/>
<dbReference type="DisGeNET" id="23251"/>
<dbReference type="GeneCards" id="MINAR1"/>
<dbReference type="HGNC" id="HGNC:29172">
    <property type="gene designation" value="MINAR1"/>
</dbReference>
<dbReference type="HPA" id="ENSG00000169330">
    <property type="expression patterns" value="Tissue enhanced (adrenal gland, brain, retina)"/>
</dbReference>
<dbReference type="MIM" id="618054">
    <property type="type" value="gene"/>
</dbReference>
<dbReference type="neXtProt" id="NX_Q9UPX6"/>
<dbReference type="OpenTargets" id="ENSG00000169330"/>
<dbReference type="PharmGKB" id="PA162393036"/>
<dbReference type="VEuPathDB" id="HostDB:ENSG00000169330"/>
<dbReference type="eggNOG" id="ENOG502QSCS">
    <property type="taxonomic scope" value="Eukaryota"/>
</dbReference>
<dbReference type="GeneTree" id="ENSGT00530000063851"/>
<dbReference type="HOGENOM" id="CLU_016692_0_0_1"/>
<dbReference type="InParanoid" id="Q9UPX6"/>
<dbReference type="OMA" id="IMQANYA"/>
<dbReference type="OrthoDB" id="8875526at2759"/>
<dbReference type="PAN-GO" id="Q9UPX6">
    <property type="GO annotations" value="3 GO annotations based on evolutionary models"/>
</dbReference>
<dbReference type="PhylomeDB" id="Q9UPX6"/>
<dbReference type="TreeFam" id="TF350677"/>
<dbReference type="PathwayCommons" id="Q9UPX6"/>
<dbReference type="SignaLink" id="Q9UPX6"/>
<dbReference type="BioGRID-ORCS" id="23251">
    <property type="hits" value="16 hits in 1148 CRISPR screens"/>
</dbReference>
<dbReference type="GenomeRNAi" id="23251"/>
<dbReference type="Pharos" id="Q9UPX6">
    <property type="development level" value="Tdark"/>
</dbReference>
<dbReference type="PRO" id="PR:Q9UPX6"/>
<dbReference type="Proteomes" id="UP000005640">
    <property type="component" value="Chromosome 15"/>
</dbReference>
<dbReference type="RNAct" id="Q9UPX6">
    <property type="molecule type" value="protein"/>
</dbReference>
<dbReference type="Bgee" id="ENSG00000169330">
    <property type="expression patterns" value="Expressed in right adrenal gland cortex and 114 other cell types or tissues"/>
</dbReference>
<dbReference type="ExpressionAtlas" id="Q9UPX6">
    <property type="expression patterns" value="baseline and differential"/>
</dbReference>
<dbReference type="GO" id="GO:0005886">
    <property type="term" value="C:plasma membrane"/>
    <property type="evidence" value="ECO:0000314"/>
    <property type="project" value="UniProtKB"/>
</dbReference>
<dbReference type="GO" id="GO:0001525">
    <property type="term" value="P:angiogenesis"/>
    <property type="evidence" value="ECO:0007669"/>
    <property type="project" value="UniProtKB-KW"/>
</dbReference>
<dbReference type="GO" id="GO:0016525">
    <property type="term" value="P:negative regulation of angiogenesis"/>
    <property type="evidence" value="ECO:0000315"/>
    <property type="project" value="UniProtKB"/>
</dbReference>
<dbReference type="GO" id="GO:0030308">
    <property type="term" value="P:negative regulation of cell growth"/>
    <property type="evidence" value="ECO:0000315"/>
    <property type="project" value="UniProtKB"/>
</dbReference>
<dbReference type="GO" id="GO:0008285">
    <property type="term" value="P:negative regulation of cell population proliferation"/>
    <property type="evidence" value="ECO:0000314"/>
    <property type="project" value="UniProtKB"/>
</dbReference>
<dbReference type="GO" id="GO:0010977">
    <property type="term" value="P:negative regulation of neuron projection development"/>
    <property type="evidence" value="ECO:0000250"/>
    <property type="project" value="UniProtKB"/>
</dbReference>
<dbReference type="GO" id="GO:0031397">
    <property type="term" value="P:negative regulation of protein ubiquitination"/>
    <property type="evidence" value="ECO:0000315"/>
    <property type="project" value="UniProtKB"/>
</dbReference>
<dbReference type="GO" id="GO:0032007">
    <property type="term" value="P:negative regulation of TOR signaling"/>
    <property type="evidence" value="ECO:0000315"/>
    <property type="project" value="UniProtKB"/>
</dbReference>
<dbReference type="InterPro" id="IPR039706">
    <property type="entry name" value="MINAR1-like"/>
</dbReference>
<dbReference type="InterPro" id="IPR009626">
    <property type="entry name" value="MINAR1-like_C"/>
</dbReference>
<dbReference type="InterPro" id="IPR055117">
    <property type="entry name" value="MINAR1_N"/>
</dbReference>
<dbReference type="PANTHER" id="PTHR31530:SF2">
    <property type="entry name" value="MAJOR INTRINSICALLY DISORDERED NOTCH2-BINDING RECEPTOR 1"/>
    <property type="match status" value="1"/>
</dbReference>
<dbReference type="PANTHER" id="PTHR31530">
    <property type="entry name" value="MAJOR INTRINSICALLY DISORDERED NOTCH2-BINDING RECEPTOR 1 MINAR1 FAMILY MEMBER"/>
    <property type="match status" value="1"/>
</dbReference>
<dbReference type="Pfam" id="PF06789">
    <property type="entry name" value="MINAR1_C"/>
    <property type="match status" value="1"/>
</dbReference>
<dbReference type="Pfam" id="PF22948">
    <property type="entry name" value="MINAR1_N"/>
    <property type="match status" value="1"/>
</dbReference>
<organism>
    <name type="scientific">Homo sapiens</name>
    <name type="common">Human</name>
    <dbReference type="NCBI Taxonomy" id="9606"/>
    <lineage>
        <taxon>Eukaryota</taxon>
        <taxon>Metazoa</taxon>
        <taxon>Chordata</taxon>
        <taxon>Craniata</taxon>
        <taxon>Vertebrata</taxon>
        <taxon>Euteleostomi</taxon>
        <taxon>Mammalia</taxon>
        <taxon>Eutheria</taxon>
        <taxon>Euarchontoglires</taxon>
        <taxon>Primates</taxon>
        <taxon>Haplorrhini</taxon>
        <taxon>Catarrhini</taxon>
        <taxon>Hominidae</taxon>
        <taxon>Homo</taxon>
    </lineage>
</organism>
<evidence type="ECO:0000250" key="1">
    <source>
        <dbReference type="UniProtKB" id="D3ZJ47"/>
    </source>
</evidence>
<evidence type="ECO:0000250" key="2">
    <source>
        <dbReference type="UniProtKB" id="Q8K3V7"/>
    </source>
</evidence>
<evidence type="ECO:0000255" key="3"/>
<evidence type="ECO:0000256" key="4">
    <source>
        <dbReference type="SAM" id="MobiDB-lite"/>
    </source>
</evidence>
<evidence type="ECO:0000269" key="5">
    <source>
    </source>
</evidence>
<evidence type="ECO:0000269" key="6">
    <source>
    </source>
</evidence>
<evidence type="ECO:0000303" key="7">
    <source>
    </source>
</evidence>
<evidence type="ECO:0000303" key="8">
    <source>
    </source>
</evidence>
<evidence type="ECO:0000305" key="9"/>
<evidence type="ECO:0000305" key="10">
    <source>
    </source>
</evidence>
<evidence type="ECO:0000305" key="11">
    <source>
    </source>
</evidence>
<keyword id="KW-0037">Angiogenesis</keyword>
<keyword id="KW-1003">Cell membrane</keyword>
<keyword id="KW-0472">Membrane</keyword>
<keyword id="KW-0597">Phosphoprotein</keyword>
<keyword id="KW-1267">Proteomics identification</keyword>
<keyword id="KW-1185">Reference proteome</keyword>
<keyword id="KW-0812">Transmembrane</keyword>
<keyword id="KW-1133">Transmembrane helix</keyword>
<sequence length="916" mass="102993">METSQETSLFLVKILEELDSKQNTVSYQDLCKSLCARFDLSQLAKLRSVLFYTACLDPNFPATLFKDKMKCTVNNQQSKKIMVAADIVTIFNLIQMNGGAAKEKLPTGRQKVRKKEASFESCRSDTEICNAAECEPLNCELSERSFSRGYPIRQSSKCRKMDCKDCPQFVPASEPNFLLGVSKEVKNRAASLDRLQALAPYSVTSPQPCEMQRTYFPMNIENESISDQDSLPINQSIKETFISNEEPFVVQSCVQKRNIFKEDFHNLMAVSPSLVGPISKAENEHREPQSRKEPHKPPFFNHSFEMPYNSQYLNPVYSPVPDKRRAKHESLDDLQASTYFGPTPVMGTQEARRCLGKPNKQTPWPAKSWSLNTEEVPDFERSFFNRNPSEEKLHYPNASSQTPNFPAPERRPTYLVPKDQQPILPIAYAAKQNGLKSKEISSPVDLEKHEPVKKFKDKSINCTSGQLSSDTSSVGTQTEHVLEPKKCRDLCTSGQGKYSDRHTMKHSDDDSEIVSDDISDIFRFLDDMSISGSTGVIQSSCYNSTGSLSQLHKSDCDSSPEHNLTKIANGVPNSKGDKGNRPENTHHSEEELKTSVCKLVLRIGEIERKLESLSGVRDEISQVLGKLNKLDQKMQQPEKVSVQIDLNSLTSEGPSDDSASPRMFHAHSGSHGPKLENNPDWCCSDASGSNSESLRVKALKKSLFTRPSSRSLTEENSATESKIASISNSPRDWRTITYTNRVGLNEEEIKDTGPGDNKDWHRKSKEADRQYDIPPQHRLPKQPKDGFLVEQVFSPHPYPASLKAHMKSNPLYTDMRLTELAEVKRGQPSWTIEEYARNAGDKGKLTALDLQTQESLNPNNLEYWMEDIYTPGYDSLLKRKEAEFRRAKVCKIAALIAAAACTVILVIVVPICTMKS</sequence>
<reference key="1">
    <citation type="journal article" date="1999" name="DNA Res.">
        <title>Prediction of the coding sequences of unidentified human genes. XIV. The complete sequences of 100 new cDNA clones from brain which code for large proteins in vitro.</title>
        <authorList>
            <person name="Kikuno R."/>
            <person name="Nagase T."/>
            <person name="Ishikawa K."/>
            <person name="Hirosawa M."/>
            <person name="Miyajima N."/>
            <person name="Tanaka A."/>
            <person name="Kotani H."/>
            <person name="Nomura N."/>
            <person name="Ohara O."/>
        </authorList>
    </citation>
    <scope>NUCLEOTIDE SEQUENCE [LARGE SCALE MRNA]</scope>
    <source>
        <tissue>Brain</tissue>
    </source>
</reference>
<reference key="2">
    <citation type="journal article" date="2002" name="DNA Res.">
        <title>Construction of expression-ready cDNA clones for KIAA genes: manual curation of 330 KIAA cDNA clones.</title>
        <authorList>
            <person name="Nakajima D."/>
            <person name="Okazaki N."/>
            <person name="Yamakawa H."/>
            <person name="Kikuno R."/>
            <person name="Ohara O."/>
            <person name="Nagase T."/>
        </authorList>
    </citation>
    <scope>SEQUENCE REVISION</scope>
</reference>
<reference key="3">
    <citation type="submission" date="2005-09" db="EMBL/GenBank/DDBJ databases">
        <authorList>
            <person name="Mural R.J."/>
            <person name="Istrail S."/>
            <person name="Sutton G.G."/>
            <person name="Florea L."/>
            <person name="Halpern A.L."/>
            <person name="Mobarry C.M."/>
            <person name="Lippert R."/>
            <person name="Walenz B."/>
            <person name="Shatkay H."/>
            <person name="Dew I."/>
            <person name="Miller J.R."/>
            <person name="Flanigan M.J."/>
            <person name="Edwards N.J."/>
            <person name="Bolanos R."/>
            <person name="Fasulo D."/>
            <person name="Halldorsson B.V."/>
            <person name="Hannenhalli S."/>
            <person name="Turner R."/>
            <person name="Yooseph S."/>
            <person name="Lu F."/>
            <person name="Nusskern D.R."/>
            <person name="Shue B.C."/>
            <person name="Zheng X.H."/>
            <person name="Zhong F."/>
            <person name="Delcher A.L."/>
            <person name="Huson D.H."/>
            <person name="Kravitz S.A."/>
            <person name="Mouchard L."/>
            <person name="Reinert K."/>
            <person name="Remington K.A."/>
            <person name="Clark A.G."/>
            <person name="Waterman M.S."/>
            <person name="Eichler E.E."/>
            <person name="Adams M.D."/>
            <person name="Hunkapiller M.W."/>
            <person name="Myers E.W."/>
            <person name="Venter J.C."/>
        </authorList>
    </citation>
    <scope>NUCLEOTIDE SEQUENCE [LARGE SCALE GENOMIC DNA]</scope>
</reference>
<reference key="4">
    <citation type="journal article" date="2004" name="Genome Res.">
        <title>The status, quality, and expansion of the NIH full-length cDNA project: the Mammalian Gene Collection (MGC).</title>
        <authorList>
            <consortium name="The MGC Project Team"/>
        </authorList>
    </citation>
    <scope>NUCLEOTIDE SEQUENCE [LARGE SCALE MRNA]</scope>
</reference>
<reference key="5">
    <citation type="journal article" date="2018" name="J. Mol. Cell Biol.">
        <title>MINAR1 is a Notch2-binding protein that inhibits angiogenesis and breast cancer growth.</title>
        <authorList>
            <person name="Ho R.X."/>
            <person name="Meyer R.D."/>
            <person name="Chandler K.B."/>
            <person name="Ersoy E."/>
            <person name="Park M."/>
            <person name="Bondzie P.A."/>
            <person name="Rahimi N."/>
            <person name="Xu H."/>
            <person name="Costello C.E."/>
            <person name="Rahimi N."/>
        </authorList>
    </citation>
    <scope>FUNCTION</scope>
    <scope>SUBCELLULAR LOCATION</scope>
    <scope>TOPOLOGY</scope>
    <scope>TISSUE SPECIFICITY</scope>
    <scope>INTERACTION WITH NOTCH2</scope>
</reference>
<reference key="6">
    <citation type="journal article" date="2018" name="PLoS Genet.">
        <title>UBTOR/KIAA1024 regulates neurite outgrowth and neoplasia through mTOR signaling.</title>
        <authorList>
            <person name="Zhang H."/>
            <person name="Zhang Q."/>
            <person name="Gao G."/>
            <person name="Wang X."/>
            <person name="Wang T."/>
            <person name="Kong Z."/>
            <person name="Wang G."/>
            <person name="Zhang C."/>
            <person name="Wang Y."/>
            <person name="Peng G."/>
        </authorList>
    </citation>
    <scope>FUNCTION</scope>
    <scope>SUBCELLULAR LOCATION</scope>
    <scope>TOPOLOGY</scope>
    <scope>INTERACTION WITH DEPTOR</scope>
</reference>
<protein>
    <recommendedName>
        <fullName evidence="7">Major intrinsically disordered Notch2-binding receptor 1</fullName>
    </recommendedName>
    <alternativeName>
        <fullName>Membrane integral NOTCH2-associated receptor 1</fullName>
    </alternativeName>
    <alternativeName>
        <fullName evidence="8">Ubiquitination and mTOR signaling protein</fullName>
    </alternativeName>
</protein>
<proteinExistence type="evidence at protein level"/>